<feature type="chain" id="PRO_0000430436" description="dTDP-epi-vancosaminyltransferase">
    <location>
        <begin position="1"/>
        <end position="396"/>
    </location>
</feature>
<feature type="binding site" evidence="6">
    <location>
        <begin position="10"/>
        <end position="12"/>
    </location>
    <ligand>
        <name>dTDP-beta-L-4-epi-vancosamine</name>
        <dbReference type="ChEBI" id="CHEBI:75957"/>
    </ligand>
</feature>
<feature type="binding site" evidence="6">
    <location>
        <position position="127"/>
    </location>
    <ligand>
        <name>devancoaminyl-vancomycin</name>
        <dbReference type="ChEBI" id="CHEBI:75953"/>
    </ligand>
</feature>
<feature type="binding site" evidence="6">
    <location>
        <position position="133"/>
    </location>
    <ligand>
        <name>devancoaminyl-vancomycin</name>
        <dbReference type="ChEBI" id="CHEBI:75953"/>
    </ligand>
</feature>
<feature type="binding site" evidence="6">
    <location>
        <position position="141"/>
    </location>
    <ligand>
        <name>devancoaminyl-vancomycin</name>
        <dbReference type="ChEBI" id="CHEBI:75953"/>
    </ligand>
</feature>
<feature type="binding site" evidence="6">
    <location>
        <position position="169"/>
    </location>
    <ligand>
        <name>devancoaminyl-vancomycin</name>
        <dbReference type="ChEBI" id="CHEBI:75953"/>
    </ligand>
</feature>
<feature type="binding site" evidence="6">
    <location>
        <position position="207"/>
    </location>
    <ligand>
        <name>dTDP-beta-L-4-epi-vancosamine</name>
        <dbReference type="ChEBI" id="CHEBI:75957"/>
    </ligand>
</feature>
<feature type="binding site" evidence="6">
    <location>
        <position position="230"/>
    </location>
    <ligand>
        <name>dTDP-beta-L-4-epi-vancosamine</name>
        <dbReference type="ChEBI" id="CHEBI:75957"/>
    </ligand>
</feature>
<feature type="binding site" evidence="6">
    <location>
        <begin position="277"/>
        <end position="278"/>
    </location>
    <ligand>
        <name>dTDP-beta-L-4-epi-vancosamine</name>
        <dbReference type="ChEBI" id="CHEBI:75957"/>
    </ligand>
</feature>
<feature type="binding site" evidence="6">
    <location>
        <begin position="293"/>
        <end position="298"/>
    </location>
    <ligand>
        <name>dTDP-beta-L-4-epi-vancosamine</name>
        <dbReference type="ChEBI" id="CHEBI:75957"/>
    </ligand>
</feature>
<feature type="strand" evidence="9">
    <location>
        <begin position="5"/>
        <end position="10"/>
    </location>
</feature>
<feature type="helix" evidence="9">
    <location>
        <begin position="11"/>
        <end position="26"/>
    </location>
</feature>
<feature type="strand" evidence="9">
    <location>
        <begin position="31"/>
        <end position="35"/>
    </location>
</feature>
<feature type="helix" evidence="9">
    <location>
        <begin position="37"/>
        <end position="39"/>
    </location>
</feature>
<feature type="helix" evidence="9">
    <location>
        <begin position="40"/>
        <end position="45"/>
    </location>
</feature>
<feature type="strand" evidence="9">
    <location>
        <begin position="50"/>
        <end position="52"/>
    </location>
</feature>
<feature type="helix" evidence="9">
    <location>
        <begin position="59"/>
        <end position="61"/>
    </location>
</feature>
<feature type="helix" evidence="9">
    <location>
        <begin position="72"/>
        <end position="74"/>
    </location>
</feature>
<feature type="helix" evidence="9">
    <location>
        <begin position="75"/>
        <end position="90"/>
    </location>
</feature>
<feature type="strand" evidence="9">
    <location>
        <begin position="94"/>
        <end position="100"/>
    </location>
</feature>
<feature type="helix" evidence="9">
    <location>
        <begin position="102"/>
        <end position="115"/>
    </location>
</feature>
<feature type="strand" evidence="9">
    <location>
        <begin position="119"/>
        <end position="125"/>
    </location>
</feature>
<feature type="helix" evidence="9">
    <location>
        <begin position="126"/>
        <end position="128"/>
    </location>
</feature>
<feature type="helix" evidence="9">
    <location>
        <begin position="130"/>
        <end position="132"/>
    </location>
</feature>
<feature type="helix" evidence="9">
    <location>
        <begin position="135"/>
        <end position="159"/>
    </location>
</feature>
<feature type="helix" evidence="9">
    <location>
        <begin position="168"/>
        <end position="173"/>
    </location>
</feature>
<feature type="turn" evidence="9">
    <location>
        <begin position="183"/>
        <end position="185"/>
    </location>
</feature>
<feature type="strand" evidence="8">
    <location>
        <begin position="193"/>
        <end position="197"/>
    </location>
</feature>
<feature type="helix" evidence="7">
    <location>
        <begin position="211"/>
        <end position="216"/>
    </location>
</feature>
<feature type="strand" evidence="7">
    <location>
        <begin position="219"/>
        <end position="221"/>
    </location>
</feature>
<feature type="strand" evidence="7">
    <location>
        <begin position="224"/>
        <end position="227"/>
    </location>
</feature>
<feature type="helix" evidence="7">
    <location>
        <begin position="235"/>
        <end position="249"/>
    </location>
</feature>
<feature type="strand" evidence="7">
    <location>
        <begin position="254"/>
        <end position="257"/>
    </location>
</feature>
<feature type="turn" evidence="7">
    <location>
        <begin position="259"/>
        <end position="262"/>
    </location>
</feature>
<feature type="strand" evidence="7">
    <location>
        <begin position="274"/>
        <end position="277"/>
    </location>
</feature>
<feature type="helix" evidence="7">
    <location>
        <begin position="280"/>
        <end position="284"/>
    </location>
</feature>
<feature type="strand" evidence="7">
    <location>
        <begin position="290"/>
        <end position="294"/>
    </location>
</feature>
<feature type="helix" evidence="7">
    <location>
        <begin position="296"/>
        <end position="305"/>
    </location>
</feature>
<feature type="strand" evidence="7">
    <location>
        <begin position="309"/>
        <end position="312"/>
    </location>
</feature>
<feature type="helix" evidence="7">
    <location>
        <begin position="324"/>
        <end position="331"/>
    </location>
</feature>
<feature type="strand" evidence="7">
    <location>
        <begin position="334"/>
        <end position="338"/>
    </location>
</feature>
<feature type="helix" evidence="7">
    <location>
        <begin position="345"/>
        <end position="355"/>
    </location>
</feature>
<feature type="helix" evidence="7">
    <location>
        <begin position="360"/>
        <end position="367"/>
    </location>
</feature>
<feature type="helix" evidence="7">
    <location>
        <begin position="368"/>
        <end position="370"/>
    </location>
</feature>
<feature type="helix" evidence="7">
    <location>
        <begin position="375"/>
        <end position="390"/>
    </location>
</feature>
<reference key="1">
    <citation type="journal article" date="1997" name="Chem. Biol.">
        <title>Production of hybrid glycopeptide antibiotics in vitro and in Streptomyces toyocaensis.</title>
        <authorList>
            <person name="Solenberg P.J."/>
            <person name="Matsushima P."/>
            <person name="Stack D.R."/>
            <person name="Wilkie S.C."/>
            <person name="Thompson R.C."/>
            <person name="Baltz R.H."/>
        </authorList>
    </citation>
    <scope>NUCLEOTIDE SEQUENCE [GENOMIC DNA]</scope>
    <scope>FUNCTION</scope>
</reference>
<reference key="2">
    <citation type="journal article" date="1998" name="Chem. Biol.">
        <title>Sequencing and analysis of genes involved in the biosynthesis of a vancomycin group antibiotic.</title>
        <authorList>
            <person name="van Wageningen A."/>
            <person name="Kirkpatrick P."/>
            <person name="Williams D."/>
            <person name="Harris B."/>
            <person name="Kershaw J."/>
            <person name="Lennard N."/>
            <person name="Jones M."/>
            <person name="Jones S."/>
            <person name="Solenberg P."/>
        </authorList>
    </citation>
    <scope>NUCLEOTIDE SEQUENCE [GENOMIC DNA]</scope>
    <scope>PATHWAY</scope>
</reference>
<reference key="3">
    <citation type="journal article" date="2004" name="Proc. Natl. Acad. Sci. U.S.A.">
        <title>Characterization of a regiospecific epivancosaminyl transferase GtfA and enzymatic reconstitution of the antibiotic chloroeremomycin.</title>
        <authorList>
            <person name="Lu W."/>
            <person name="Oberthuer M."/>
            <person name="Leimkuhler C."/>
            <person name="Tao J."/>
            <person name="Kahne D."/>
            <person name="Walsh C.T."/>
        </authorList>
    </citation>
    <scope>FUNCTION</scope>
    <scope>CATALYTIC ACTIVITY</scope>
    <scope>PATHWAY</scope>
</reference>
<reference key="4">
    <citation type="journal article" date="2003" name="Proc. Natl. Acad. Sci. U.S.A.">
        <title>Structure of the TDP-epi-vancosaminyltransferase GtfA from the chloroeremomycin biosynthetic pathway.</title>
        <authorList>
            <person name="Mulichak A.M."/>
            <person name="Losey H.C."/>
            <person name="Lu W."/>
            <person name="Wawrzak Z."/>
            <person name="Walsh C.T."/>
            <person name="Garavito R.M."/>
        </authorList>
    </citation>
    <scope>X-RAY CRYSTALLOGRAPHY (2.80 ANGSTROMS) IN COMPLEX WITH VANCOMYCIN AND DTDP-BETA-L-4-EPI-VANCOSAMINE</scope>
</reference>
<reference key="5">
    <citation type="journal article" date="2009" name="Chem. Biol.">
        <title>Chimeric glycosyltransferases for the generation of hybrid glycopeptides.</title>
        <authorList>
            <person name="Truman A.W."/>
            <person name="Dias M.V."/>
            <person name="Wu S."/>
            <person name="Blundell T.L."/>
            <person name="Huang F."/>
            <person name="Spencer J.B."/>
        </authorList>
    </citation>
    <scope>X-RAY CRYSTALLOGRAPHY (1.15 ANGSTROMS) OF 1-214 IN COMPLEX WITH UDP-2-DEOXY-2-FLUORO-GLUCOSE</scope>
    <scope>FUNCTION</scope>
</reference>
<proteinExistence type="evidence at protein level"/>
<sequence>MRVLITGCGSRGDTEPLVALAARLRELGADARMCLPPDYVERCAEVGVPMVPVGRAVRAGAREPGELPPGAAEVVTEVVAEWFDKVPAAIEGCDAVVTTGLLPAAVAVRSMAEKLGIPYRYTVLSPDHLPSEQSQAERDMYNQGADRLFGDAVNSHRASIGLPPVEHLYDYGYTDQPWLAADPVLSPLRPTDLGTVQTGAWILPDERPLSAELEAFLAAGSTPVYVGFGSSSRPATADAAKMAIKAVRASGRRIVLSRGWADLVLPDDGADCFVVGEVNLQELFGRVAAAIHHDSAGTTLLAMRAGIPQIVVRRVVDNVVEQAYHADRVAELGVGVAVDGPVPTIDSLSAALDTALAPEIRARATTVADTIRADGTTVAAQLLFDAVSLEKPTVPA</sequence>
<accession>P96558</accession>
<keyword id="KW-0002">3D-structure</keyword>
<keyword id="KW-0045">Antibiotic biosynthesis</keyword>
<keyword id="KW-0328">Glycosyltransferase</keyword>
<keyword id="KW-0808">Transferase</keyword>
<evidence type="ECO:0000269" key="1">
    <source>
    </source>
</evidence>
<evidence type="ECO:0000269" key="2">
    <source>
    </source>
</evidence>
<evidence type="ECO:0000269" key="3">
    <source>
    </source>
</evidence>
<evidence type="ECO:0000269" key="4">
    <source>
    </source>
</evidence>
<evidence type="ECO:0000305" key="5"/>
<evidence type="ECO:0000305" key="6">
    <source>
    </source>
</evidence>
<evidence type="ECO:0007829" key="7">
    <source>
        <dbReference type="PDB" id="1PN3"/>
    </source>
</evidence>
<evidence type="ECO:0007829" key="8">
    <source>
        <dbReference type="PDB" id="1PNV"/>
    </source>
</evidence>
<evidence type="ECO:0007829" key="9">
    <source>
        <dbReference type="PDB" id="3H4T"/>
    </source>
</evidence>
<dbReference type="EC" id="2.4.1.311"/>
<dbReference type="EMBL" id="U84349">
    <property type="protein sequence ID" value="AAB49292.1"/>
    <property type="molecule type" value="Genomic_DNA"/>
</dbReference>
<dbReference type="EMBL" id="AJ223998">
    <property type="protein sequence ID" value="CAA11774.1"/>
    <property type="molecule type" value="Genomic_DNA"/>
</dbReference>
<dbReference type="PIR" id="T30584">
    <property type="entry name" value="T30584"/>
</dbReference>
<dbReference type="PDB" id="1PN3">
    <property type="method" value="X-ray"/>
    <property type="resolution" value="2.80 A"/>
    <property type="chains" value="A/B=1-396"/>
</dbReference>
<dbReference type="PDB" id="1PNV">
    <property type="method" value="X-ray"/>
    <property type="resolution" value="2.80 A"/>
    <property type="chains" value="A/B=1-396"/>
</dbReference>
<dbReference type="PDB" id="3H4I">
    <property type="method" value="X-ray"/>
    <property type="resolution" value="1.30 A"/>
    <property type="chains" value="A=1-214"/>
</dbReference>
<dbReference type="PDB" id="3H4T">
    <property type="method" value="X-ray"/>
    <property type="resolution" value="1.15 A"/>
    <property type="chains" value="A=1-214"/>
</dbReference>
<dbReference type="PDBsum" id="1PN3"/>
<dbReference type="PDBsum" id="1PNV"/>
<dbReference type="PDBsum" id="3H4I"/>
<dbReference type="PDBsum" id="3H4T"/>
<dbReference type="SMR" id="P96558"/>
<dbReference type="DrugBank" id="DB04529">
    <property type="generic name" value="Desvancosaminyl vancomycin"/>
</dbReference>
<dbReference type="CAZy" id="GT1">
    <property type="family name" value="Glycosyltransferase Family 1"/>
</dbReference>
<dbReference type="KEGG" id="ag:CAA11774"/>
<dbReference type="BRENDA" id="2.4.1.311">
    <property type="organism ID" value="315"/>
</dbReference>
<dbReference type="UniPathway" id="UPA00162"/>
<dbReference type="EvolutionaryTrace" id="P96558"/>
<dbReference type="GO" id="GO:0016758">
    <property type="term" value="F:hexosyltransferase activity"/>
    <property type="evidence" value="ECO:0000314"/>
    <property type="project" value="UniProtKB"/>
</dbReference>
<dbReference type="GO" id="GO:0008194">
    <property type="term" value="F:UDP-glycosyltransferase activity"/>
    <property type="evidence" value="ECO:0007669"/>
    <property type="project" value="InterPro"/>
</dbReference>
<dbReference type="GO" id="GO:0005975">
    <property type="term" value="P:carbohydrate metabolic process"/>
    <property type="evidence" value="ECO:0007669"/>
    <property type="project" value="InterPro"/>
</dbReference>
<dbReference type="GO" id="GO:0030259">
    <property type="term" value="P:lipid glycosylation"/>
    <property type="evidence" value="ECO:0007669"/>
    <property type="project" value="InterPro"/>
</dbReference>
<dbReference type="GO" id="GO:0033072">
    <property type="term" value="P:vancomycin biosynthetic process"/>
    <property type="evidence" value="ECO:0000314"/>
    <property type="project" value="UniProtKB"/>
</dbReference>
<dbReference type="CDD" id="cd03784">
    <property type="entry name" value="GT1_Gtf-like"/>
    <property type="match status" value="1"/>
</dbReference>
<dbReference type="FunFam" id="3.40.50.2000:FF:000292">
    <property type="entry name" value="Glycosyltransferase GtfE"/>
    <property type="match status" value="1"/>
</dbReference>
<dbReference type="FunFam" id="3.40.50.2000:FF:000009">
    <property type="entry name" value="Sterol 3-beta-glucosyltransferase UGT80A2"/>
    <property type="match status" value="1"/>
</dbReference>
<dbReference type="Gene3D" id="3.40.50.2000">
    <property type="entry name" value="Glycogen Phosphorylase B"/>
    <property type="match status" value="2"/>
</dbReference>
<dbReference type="InterPro" id="IPR010610">
    <property type="entry name" value="EryCIII-like_C"/>
</dbReference>
<dbReference type="InterPro" id="IPR050426">
    <property type="entry name" value="Glycosyltransferase_28"/>
</dbReference>
<dbReference type="InterPro" id="IPR004276">
    <property type="entry name" value="GlycoTrans_28_N"/>
</dbReference>
<dbReference type="InterPro" id="IPR002213">
    <property type="entry name" value="UDP_glucos_trans"/>
</dbReference>
<dbReference type="PANTHER" id="PTHR48050">
    <property type="entry name" value="STEROL 3-BETA-GLUCOSYLTRANSFERASE"/>
    <property type="match status" value="1"/>
</dbReference>
<dbReference type="PANTHER" id="PTHR48050:SF13">
    <property type="entry name" value="STEROL 3-BETA-GLUCOSYLTRANSFERASE UGT80A2"/>
    <property type="match status" value="1"/>
</dbReference>
<dbReference type="Pfam" id="PF06722">
    <property type="entry name" value="EryCIII-like_C"/>
    <property type="match status" value="1"/>
</dbReference>
<dbReference type="Pfam" id="PF03033">
    <property type="entry name" value="Glyco_transf_28"/>
    <property type="match status" value="1"/>
</dbReference>
<dbReference type="SUPFAM" id="SSF53756">
    <property type="entry name" value="UDP-Glycosyltransferase/glycogen phosphorylase"/>
    <property type="match status" value="1"/>
</dbReference>
<name>GTFA_AMYOR</name>
<protein>
    <recommendedName>
        <fullName>dTDP-epi-vancosaminyltransferase</fullName>
        <ecNumber>2.4.1.311</ecNumber>
    </recommendedName>
    <alternativeName>
        <fullName>Glycosyltransferase AH1</fullName>
        <shortName>GtfAH1</shortName>
    </alternativeName>
    <alternativeName>
        <fullName>Glycosyltransferase GtfA</fullName>
    </alternativeName>
</protein>
<comment type="function">
    <text evidence="1 2 3">Catalyzes the attachment of 4-epi-vancosamine from a TDP donor to the beta-OH-Tyr-6 of the aglycone cosubstrate in the biosynthesis of glycopeptide antibiotic chloroeremomycin, a member of the vancomycin group of antibiotics. Strongly prefers devancoaminyl-vancomycin (DVV) as substrate rather than the heptapeptide vancomycin aglycone (AGV). Acts downstream of GtfB.</text>
</comment>
<comment type="catalytic activity">
    <reaction evidence="1">
        <text>dTDP-beta-L-4-epi-vancosamine + devancoaminyl-vancomycin = chloroorienticin B + dTDP + H(+)</text>
        <dbReference type="Rhea" id="RHEA:38591"/>
        <dbReference type="ChEBI" id="CHEBI:15378"/>
        <dbReference type="ChEBI" id="CHEBI:58369"/>
        <dbReference type="ChEBI" id="CHEBI:75953"/>
        <dbReference type="ChEBI" id="CHEBI:75957"/>
        <dbReference type="ChEBI" id="CHEBI:75963"/>
        <dbReference type="EC" id="2.4.1.311"/>
    </reaction>
</comment>
<comment type="pathway">
    <text evidence="1 4">Antibiotic biosynthesis; vancomycin biosynthesis.</text>
</comment>
<comment type="miscellaneous">
    <text>In A.orientalis different glycosyltransferases are involved in biosynthesis of the vancomycin group of antibiotics. GtfA, GtfB (AC P96559) and GtfC (AC P96560) are involved in biosynthesis of antibiotic chloroeremomycin, while GtfD (AC Q9AFC7) and GtfE (AC G4V4R9) are involved in biosynthesis of vancomycin.</text>
</comment>
<comment type="similarity">
    <text evidence="5">Belongs to the glycosyltransferase 28 family.</text>
</comment>
<gene>
    <name type="primary">gtfA</name>
</gene>
<organism>
    <name type="scientific">Amycolatopsis orientalis</name>
    <name type="common">Nocardia orientalis</name>
    <dbReference type="NCBI Taxonomy" id="31958"/>
    <lineage>
        <taxon>Bacteria</taxon>
        <taxon>Bacillati</taxon>
        <taxon>Actinomycetota</taxon>
        <taxon>Actinomycetes</taxon>
        <taxon>Pseudonocardiales</taxon>
        <taxon>Pseudonocardiaceae</taxon>
        <taxon>Amycolatopsis</taxon>
    </lineage>
</organism>